<accession>Q01263</accession>
<accession>O70096</accession>
<gene>
    <name evidence="2" type="primary">hyuB</name>
</gene>
<organism>
    <name type="scientific">Pseudomonas sp. (strain NS671)</name>
    <dbReference type="NCBI Taxonomy" id="29441"/>
    <lineage>
        <taxon>Bacteria</taxon>
        <taxon>Pseudomonadati</taxon>
        <taxon>Pseudomonadota</taxon>
    </lineage>
</organism>
<feature type="chain" id="PRO_0000208581" description="Putative D-/L-hydantoinase subunit B">
    <location>
        <begin position="1"/>
        <end position="592"/>
    </location>
</feature>
<geneLocation type="plasmid">
    <name>pHN671</name>
</geneLocation>
<protein>
    <recommendedName>
        <fullName evidence="4">Putative D-/L-hydantoinase subunit B</fullName>
        <ecNumber evidence="4">3.5.2.-</ecNumber>
    </recommendedName>
    <alternativeName>
        <fullName evidence="2">Hydantoin utilization protein B</fullName>
    </alternativeName>
</protein>
<evidence type="ECO:0000269" key="1">
    <source>
    </source>
</evidence>
<evidence type="ECO:0000303" key="2">
    <source>
    </source>
</evidence>
<evidence type="ECO:0000305" key="3"/>
<evidence type="ECO:0000305" key="4">
    <source>
    </source>
</evidence>
<keyword id="KW-0028">Amino-acid biosynthesis</keyword>
<keyword id="KW-0378">Hydrolase</keyword>
<keyword id="KW-0614">Plasmid</keyword>
<name>HYUB_PSESN</name>
<reference key="1">
    <citation type="journal article" date="1992" name="J. Bacteriol.">
        <title>Cloning and sequencing of the genes involved in the conversion of 5-substituted hydantoins to the corresponding L-amino acids from the native plasmid of Pseudomonas sp. strain NS671.</title>
        <authorList>
            <person name="Watabe K."/>
        </authorList>
    </citation>
    <scope>NUCLEOTIDE SEQUENCE [GENOMIC DNA]</scope>
    <scope>FUNCTION</scope>
    <source>
        <strain>NS671</strain>
    </source>
</reference>
<proteinExistence type="inferred from homology"/>
<sequence>MSKIHTDLKKIDPITVQVVLGSLENVAVEMGHKLARMSYSSIIRESEDFGCALVDVRGQQLCESSHSTPLQSGPIPGYIKGIREIMEDRNDTFNQGDVIMHNSPYHGASHGPDVGFCIPVFYKDELIGFSVTTAHHLDIGSSTPGSCGIVDAVDAYAEGLQFKAIKVYDQGVKNRYVWDILKDNIRAPKLVVGDMEAQIAAARIGAQRYIEIIEKYGLDTVQAASEELMNYSEKMMRDAIKKLPDGEYTAEGFLDGYLDSDDPAKKDLRINVTVKVDGSDLTVDLTGTSPQVTDKPINMPLLGTVDIAIYLTLRSILLDSTVYGNFPQNSGLIRPIKIVAPKGTLCNPIFPAPTIARFNSGNAVADTLMKALAQVVPHQVSAGVGNLQVVAFSGQSNENYWVYMDIMEGSYGGRYGKDGMDAVDTLYANTRNNPIEDIESHYPLRVNRYELRDNDSAPGKWRGGIGSIREVSFLADGSFSVEADGHKYAPWGFDDGQDGYVGSLSIRDNETNELVQLPSKLPNRHAQSGSTIQLVGPCGGGYGNPLEREPEKVLSDYLDGFITKEKALVEYGVTITDSEEIDYEKTNELRKV</sequence>
<comment type="function">
    <text evidence="1">Involved in the asymmetric conversion of racemic 5-substituted hydantoins to the corresponding L-amino acids. HyuA and HyuB are both required for the conversion of D- and L-5-substituted hydantoins to corresponding N-carbamoyl-D- and N-carbamoyl-L-amino acids, respectively.</text>
</comment>
<comment type="subunit">
    <text evidence="3">May form a complex with HyuA.</text>
</comment>
<comment type="similarity">
    <text evidence="3">Belongs to the HyuB family.</text>
</comment>
<dbReference type="EC" id="3.5.2.-" evidence="4"/>
<dbReference type="EMBL" id="M72717">
    <property type="protein sequence ID" value="AAA25846.1"/>
    <property type="molecule type" value="Genomic_DNA"/>
</dbReference>
<dbReference type="EMBL" id="D10494">
    <property type="protein sequence ID" value="BAA01378.1"/>
    <property type="molecule type" value="Genomic_DNA"/>
</dbReference>
<dbReference type="SMR" id="Q01263"/>
<dbReference type="KEGG" id="ag:BAA01378"/>
<dbReference type="GO" id="GO:0005829">
    <property type="term" value="C:cytosol"/>
    <property type="evidence" value="ECO:0007669"/>
    <property type="project" value="TreeGrafter"/>
</dbReference>
<dbReference type="GO" id="GO:0017168">
    <property type="term" value="F:5-oxoprolinase (ATP-hydrolyzing) activity"/>
    <property type="evidence" value="ECO:0007669"/>
    <property type="project" value="TreeGrafter"/>
</dbReference>
<dbReference type="GO" id="GO:0016810">
    <property type="term" value="F:hydrolase activity, acting on carbon-nitrogen (but not peptide) bonds"/>
    <property type="evidence" value="ECO:0000314"/>
    <property type="project" value="UniProtKB"/>
</dbReference>
<dbReference type="GO" id="GO:0008652">
    <property type="term" value="P:amino acid biosynthetic process"/>
    <property type="evidence" value="ECO:0007669"/>
    <property type="project" value="UniProtKB-KW"/>
</dbReference>
<dbReference type="GO" id="GO:0006749">
    <property type="term" value="P:glutathione metabolic process"/>
    <property type="evidence" value="ECO:0007669"/>
    <property type="project" value="TreeGrafter"/>
</dbReference>
<dbReference type="InterPro" id="IPR003692">
    <property type="entry name" value="Hydantoinase_B"/>
</dbReference>
<dbReference type="InterPro" id="IPR045079">
    <property type="entry name" value="Oxoprolinase-like"/>
</dbReference>
<dbReference type="PANTHER" id="PTHR11365">
    <property type="entry name" value="5-OXOPROLINASE RELATED"/>
    <property type="match status" value="1"/>
</dbReference>
<dbReference type="PANTHER" id="PTHR11365:SF23">
    <property type="entry name" value="HYPOTHETICAL 5-OXOPROLINASE (EUROFUNG)-RELATED"/>
    <property type="match status" value="1"/>
</dbReference>
<dbReference type="Pfam" id="PF02538">
    <property type="entry name" value="Hydantoinase_B"/>
    <property type="match status" value="1"/>
</dbReference>